<feature type="initiator methionine" description="Removed" evidence="1">
    <location>
        <position position="1"/>
    </location>
</feature>
<feature type="chain" id="PRO_0000244065" description="FAS-associated factor 2">
    <location>
        <begin position="2"/>
        <end position="445"/>
    </location>
</feature>
<feature type="domain" description="UBA">
    <location>
        <begin position="12"/>
        <end position="48"/>
    </location>
</feature>
<feature type="domain" description="UBX" evidence="3">
    <location>
        <begin position="357"/>
        <end position="439"/>
    </location>
</feature>
<feature type="region of interest" description="Disordered" evidence="4">
    <location>
        <begin position="300"/>
        <end position="361"/>
    </location>
</feature>
<feature type="coiled-coil region" evidence="2">
    <location>
        <begin position="275"/>
        <end position="350"/>
    </location>
</feature>
<feature type="compositionally biased region" description="Basic and acidic residues" evidence="4">
    <location>
        <begin position="303"/>
        <end position="348"/>
    </location>
</feature>
<feature type="modified residue" description="N-acetylalanine" evidence="1">
    <location>
        <position position="2"/>
    </location>
</feature>
<feature type="modified residue" description="N6-acetyllysine" evidence="1">
    <location>
        <position position="167"/>
    </location>
</feature>
<feature type="splice variant" id="VSP_019504" description="In isoform 2." evidence="7">
    <location>
        <begin position="71"/>
        <end position="89"/>
    </location>
</feature>
<feature type="sequence conflict" description="In Ref. 2; AAH46817." evidence="8" ref="2">
    <location>
        <position position="72"/>
    </location>
</feature>
<feature type="sequence conflict" description="In Ref. 1; BAE41569." evidence="8" ref="1">
    <original>GLSHT</original>
    <variation>DSATQ</variation>
    <location>
        <begin position="430"/>
        <end position="434"/>
    </location>
</feature>
<reference key="1">
    <citation type="journal article" date="2005" name="Science">
        <title>The transcriptional landscape of the mammalian genome.</title>
        <authorList>
            <person name="Carninci P."/>
            <person name="Kasukawa T."/>
            <person name="Katayama S."/>
            <person name="Gough J."/>
            <person name="Frith M.C."/>
            <person name="Maeda N."/>
            <person name="Oyama R."/>
            <person name="Ravasi T."/>
            <person name="Lenhard B."/>
            <person name="Wells C."/>
            <person name="Kodzius R."/>
            <person name="Shimokawa K."/>
            <person name="Bajic V.B."/>
            <person name="Brenner S.E."/>
            <person name="Batalov S."/>
            <person name="Forrest A.R."/>
            <person name="Zavolan M."/>
            <person name="Davis M.J."/>
            <person name="Wilming L.G."/>
            <person name="Aidinis V."/>
            <person name="Allen J.E."/>
            <person name="Ambesi-Impiombato A."/>
            <person name="Apweiler R."/>
            <person name="Aturaliya R.N."/>
            <person name="Bailey T.L."/>
            <person name="Bansal M."/>
            <person name="Baxter L."/>
            <person name="Beisel K.W."/>
            <person name="Bersano T."/>
            <person name="Bono H."/>
            <person name="Chalk A.M."/>
            <person name="Chiu K.P."/>
            <person name="Choudhary V."/>
            <person name="Christoffels A."/>
            <person name="Clutterbuck D.R."/>
            <person name="Crowe M.L."/>
            <person name="Dalla E."/>
            <person name="Dalrymple B.P."/>
            <person name="de Bono B."/>
            <person name="Della Gatta G."/>
            <person name="di Bernardo D."/>
            <person name="Down T."/>
            <person name="Engstrom P."/>
            <person name="Fagiolini M."/>
            <person name="Faulkner G."/>
            <person name="Fletcher C.F."/>
            <person name="Fukushima T."/>
            <person name="Furuno M."/>
            <person name="Futaki S."/>
            <person name="Gariboldi M."/>
            <person name="Georgii-Hemming P."/>
            <person name="Gingeras T.R."/>
            <person name="Gojobori T."/>
            <person name="Green R.E."/>
            <person name="Gustincich S."/>
            <person name="Harbers M."/>
            <person name="Hayashi Y."/>
            <person name="Hensch T.K."/>
            <person name="Hirokawa N."/>
            <person name="Hill D."/>
            <person name="Huminiecki L."/>
            <person name="Iacono M."/>
            <person name="Ikeo K."/>
            <person name="Iwama A."/>
            <person name="Ishikawa T."/>
            <person name="Jakt M."/>
            <person name="Kanapin A."/>
            <person name="Katoh M."/>
            <person name="Kawasawa Y."/>
            <person name="Kelso J."/>
            <person name="Kitamura H."/>
            <person name="Kitano H."/>
            <person name="Kollias G."/>
            <person name="Krishnan S.P."/>
            <person name="Kruger A."/>
            <person name="Kummerfeld S.K."/>
            <person name="Kurochkin I.V."/>
            <person name="Lareau L.F."/>
            <person name="Lazarevic D."/>
            <person name="Lipovich L."/>
            <person name="Liu J."/>
            <person name="Liuni S."/>
            <person name="McWilliam S."/>
            <person name="Madan Babu M."/>
            <person name="Madera M."/>
            <person name="Marchionni L."/>
            <person name="Matsuda H."/>
            <person name="Matsuzawa S."/>
            <person name="Miki H."/>
            <person name="Mignone F."/>
            <person name="Miyake S."/>
            <person name="Morris K."/>
            <person name="Mottagui-Tabar S."/>
            <person name="Mulder N."/>
            <person name="Nakano N."/>
            <person name="Nakauchi H."/>
            <person name="Ng P."/>
            <person name="Nilsson R."/>
            <person name="Nishiguchi S."/>
            <person name="Nishikawa S."/>
            <person name="Nori F."/>
            <person name="Ohara O."/>
            <person name="Okazaki Y."/>
            <person name="Orlando V."/>
            <person name="Pang K.C."/>
            <person name="Pavan W.J."/>
            <person name="Pavesi G."/>
            <person name="Pesole G."/>
            <person name="Petrovsky N."/>
            <person name="Piazza S."/>
            <person name="Reed J."/>
            <person name="Reid J.F."/>
            <person name="Ring B.Z."/>
            <person name="Ringwald M."/>
            <person name="Rost B."/>
            <person name="Ruan Y."/>
            <person name="Salzberg S.L."/>
            <person name="Sandelin A."/>
            <person name="Schneider C."/>
            <person name="Schoenbach C."/>
            <person name="Sekiguchi K."/>
            <person name="Semple C.A."/>
            <person name="Seno S."/>
            <person name="Sessa L."/>
            <person name="Sheng Y."/>
            <person name="Shibata Y."/>
            <person name="Shimada H."/>
            <person name="Shimada K."/>
            <person name="Silva D."/>
            <person name="Sinclair B."/>
            <person name="Sperling S."/>
            <person name="Stupka E."/>
            <person name="Sugiura K."/>
            <person name="Sultana R."/>
            <person name="Takenaka Y."/>
            <person name="Taki K."/>
            <person name="Tammoja K."/>
            <person name="Tan S.L."/>
            <person name="Tang S."/>
            <person name="Taylor M.S."/>
            <person name="Tegner J."/>
            <person name="Teichmann S.A."/>
            <person name="Ueda H.R."/>
            <person name="van Nimwegen E."/>
            <person name="Verardo R."/>
            <person name="Wei C.L."/>
            <person name="Yagi K."/>
            <person name="Yamanishi H."/>
            <person name="Zabarovsky E."/>
            <person name="Zhu S."/>
            <person name="Zimmer A."/>
            <person name="Hide W."/>
            <person name="Bult C."/>
            <person name="Grimmond S.M."/>
            <person name="Teasdale R.D."/>
            <person name="Liu E.T."/>
            <person name="Brusic V."/>
            <person name="Quackenbush J."/>
            <person name="Wahlestedt C."/>
            <person name="Mattick J.S."/>
            <person name="Hume D.A."/>
            <person name="Kai C."/>
            <person name="Sasaki D."/>
            <person name="Tomaru Y."/>
            <person name="Fukuda S."/>
            <person name="Kanamori-Katayama M."/>
            <person name="Suzuki M."/>
            <person name="Aoki J."/>
            <person name="Arakawa T."/>
            <person name="Iida J."/>
            <person name="Imamura K."/>
            <person name="Itoh M."/>
            <person name="Kato T."/>
            <person name="Kawaji H."/>
            <person name="Kawagashira N."/>
            <person name="Kawashima T."/>
            <person name="Kojima M."/>
            <person name="Kondo S."/>
            <person name="Konno H."/>
            <person name="Nakano K."/>
            <person name="Ninomiya N."/>
            <person name="Nishio T."/>
            <person name="Okada M."/>
            <person name="Plessy C."/>
            <person name="Shibata K."/>
            <person name="Shiraki T."/>
            <person name="Suzuki S."/>
            <person name="Tagami M."/>
            <person name="Waki K."/>
            <person name="Watahiki A."/>
            <person name="Okamura-Oho Y."/>
            <person name="Suzuki H."/>
            <person name="Kawai J."/>
            <person name="Hayashizaki Y."/>
        </authorList>
    </citation>
    <scope>NUCLEOTIDE SEQUENCE [LARGE SCALE MRNA] (ISOFORMS 1 AND 2)</scope>
    <source>
        <strain>NOD</strain>
    </source>
</reference>
<reference key="2">
    <citation type="journal article" date="2004" name="Genome Res.">
        <title>The status, quality, and expansion of the NIH full-length cDNA project: the Mammalian Gene Collection (MGC).</title>
        <authorList>
            <consortium name="The MGC Project Team"/>
        </authorList>
    </citation>
    <scope>NUCLEOTIDE SEQUENCE [LARGE SCALE MRNA] (ISOFORM 1)</scope>
    <source>
        <strain>C57BL/6J</strain>
        <tissue>Brain</tissue>
    </source>
</reference>
<reference key="3">
    <citation type="journal article" date="2003" name="DNA Res.">
        <title>Prediction of the coding sequences of mouse homologues of KIAA gene: II. The complete nucleotide sequences of 400 mouse KIAA-homologous cDNAs identified by screening of terminal sequences of cDNA clones randomly sampled from size-fractionated libraries.</title>
        <authorList>
            <person name="Okazaki N."/>
            <person name="Kikuno R."/>
            <person name="Ohara R."/>
            <person name="Inamoto S."/>
            <person name="Aizawa H."/>
            <person name="Yuasa S."/>
            <person name="Nakajima D."/>
            <person name="Nagase T."/>
            <person name="Ohara O."/>
            <person name="Koga H."/>
        </authorList>
    </citation>
    <scope>NUCLEOTIDE SEQUENCE [LARGE SCALE MRNA] OF 17-445 (ISOFORM 1)</scope>
    <source>
        <tissue>Brain</tissue>
    </source>
</reference>
<reference key="4">
    <citation type="journal article" date="2010" name="Cell">
        <title>A tissue-specific atlas of mouse protein phosphorylation and expression.</title>
        <authorList>
            <person name="Huttlin E.L."/>
            <person name="Jedrychowski M.P."/>
            <person name="Elias J.E."/>
            <person name="Goswami T."/>
            <person name="Rad R."/>
            <person name="Beausoleil S.A."/>
            <person name="Villen J."/>
            <person name="Haas W."/>
            <person name="Sowa M.E."/>
            <person name="Gygi S.P."/>
        </authorList>
    </citation>
    <scope>IDENTIFICATION BY MASS SPECTROMETRY [LARGE SCALE ANALYSIS]</scope>
    <source>
        <tissue>Brain</tissue>
        <tissue>Brown adipose tissue</tissue>
        <tissue>Heart</tissue>
        <tissue>Kidney</tissue>
        <tissue>Liver</tissue>
        <tissue>Lung</tissue>
        <tissue>Pancreas</tissue>
        <tissue>Spleen</tissue>
        <tissue>Testis</tissue>
    </source>
</reference>
<reference key="5">
    <citation type="journal article" date="2014" name="Biochem. J.">
        <title>Signal-peptide-mediated translocation is regulated by a p97-AIRAPL complex.</title>
        <authorList>
            <person name="Glinka T."/>
            <person name="Alter J."/>
            <person name="Braunstein I."/>
            <person name="Tzach L."/>
            <person name="Wei Sheng C."/>
            <person name="Geifman S."/>
            <person name="Edelmann M.J."/>
            <person name="Kessler B.M."/>
            <person name="Stanhill A."/>
        </authorList>
    </citation>
    <scope>INTERACTION WITH ZFAND2B</scope>
</reference>
<reference key="6">
    <citation type="journal article" date="2019" name="Science">
        <title>LMBR1L regulates lymphopoiesis through Wnt/beta-catenin signaling.</title>
        <authorList>
            <person name="Choi J.H."/>
            <person name="Zhong X."/>
            <person name="McAlpine W."/>
            <person name="Liao T.C."/>
            <person name="Zhang D."/>
            <person name="Fang B."/>
            <person name="Russell J."/>
            <person name="Ludwig S."/>
            <person name="Nair-Gill E."/>
            <person name="Zhang Z."/>
            <person name="Wang K.W."/>
            <person name="Misawa T."/>
            <person name="Zhan X."/>
            <person name="Choi M."/>
            <person name="Wang T."/>
            <person name="Li X."/>
            <person name="Tang M."/>
            <person name="Sun Q."/>
            <person name="Yu L."/>
            <person name="Murray A.R."/>
            <person name="Moresco E.M.Y."/>
            <person name="Beutler B."/>
        </authorList>
    </citation>
    <scope>INTERACTION WITH LMBR1L AND UBAC2</scope>
</reference>
<proteinExistence type="evidence at protein level"/>
<protein>
    <recommendedName>
        <fullName>FAS-associated factor 2</fullName>
    </recommendedName>
    <alternativeName>
        <fullName>UBX domain-containing protein 8</fullName>
    </alternativeName>
</protein>
<accession>Q3TDN2</accession>
<accession>Q3U9W2</accession>
<accession>Q80TP7</accession>
<accession>Q80W42</accession>
<evidence type="ECO:0000250" key="1">
    <source>
        <dbReference type="UniProtKB" id="Q96CS3"/>
    </source>
</evidence>
<evidence type="ECO:0000255" key="2"/>
<evidence type="ECO:0000255" key="3">
    <source>
        <dbReference type="PROSITE-ProRule" id="PRU00215"/>
    </source>
</evidence>
<evidence type="ECO:0000256" key="4">
    <source>
        <dbReference type="SAM" id="MobiDB-lite"/>
    </source>
</evidence>
<evidence type="ECO:0000269" key="5">
    <source>
    </source>
</evidence>
<evidence type="ECO:0000269" key="6">
    <source>
    </source>
</evidence>
<evidence type="ECO:0000303" key="7">
    <source>
    </source>
</evidence>
<evidence type="ECO:0000305" key="8"/>
<dbReference type="EMBL" id="AK151617">
    <property type="protein sequence ID" value="BAE30554.1"/>
    <property type="molecule type" value="mRNA"/>
</dbReference>
<dbReference type="EMBL" id="AK170111">
    <property type="protein sequence ID" value="BAE41569.1"/>
    <property type="molecule type" value="mRNA"/>
</dbReference>
<dbReference type="EMBL" id="BC046817">
    <property type="protein sequence ID" value="AAH46817.1"/>
    <property type="molecule type" value="mRNA"/>
</dbReference>
<dbReference type="EMBL" id="AK122394">
    <property type="protein sequence ID" value="BAC65676.1"/>
    <property type="molecule type" value="mRNA"/>
</dbReference>
<dbReference type="CCDS" id="CCDS36668.1">
    <molecule id="Q3TDN2-1"/>
</dbReference>
<dbReference type="RefSeq" id="NP_848484.2">
    <molecule id="Q3TDN2-1"/>
    <property type="nucleotide sequence ID" value="NM_178397.3"/>
</dbReference>
<dbReference type="SMR" id="Q3TDN2"/>
<dbReference type="BioGRID" id="218186">
    <property type="interactions" value="35"/>
</dbReference>
<dbReference type="FunCoup" id="Q3TDN2">
    <property type="interactions" value="4283"/>
</dbReference>
<dbReference type="STRING" id="10090.ENSMUSP00000121182"/>
<dbReference type="GlyGen" id="Q3TDN2">
    <property type="glycosylation" value="1 site, 1 N-linked glycan (1 site)"/>
</dbReference>
<dbReference type="iPTMnet" id="Q3TDN2"/>
<dbReference type="PhosphoSitePlus" id="Q3TDN2"/>
<dbReference type="SwissPalm" id="Q3TDN2"/>
<dbReference type="jPOST" id="Q3TDN2"/>
<dbReference type="PaxDb" id="10090-ENSMUSP00000121182"/>
<dbReference type="PeptideAtlas" id="Q3TDN2"/>
<dbReference type="ProteomicsDB" id="266835">
    <molecule id="Q3TDN2-1"/>
</dbReference>
<dbReference type="ProteomicsDB" id="266836">
    <molecule id="Q3TDN2-2"/>
</dbReference>
<dbReference type="Pumba" id="Q3TDN2"/>
<dbReference type="Antibodypedia" id="29092">
    <property type="antibodies" value="206 antibodies from 34 providers"/>
</dbReference>
<dbReference type="DNASU" id="76577"/>
<dbReference type="Ensembl" id="ENSMUST00000026991.16">
    <molecule id="Q3TDN2-2"/>
    <property type="protein sequence ID" value="ENSMUSP00000026991.10"/>
    <property type="gene ID" value="ENSMUSG00000025873.17"/>
</dbReference>
<dbReference type="Ensembl" id="ENSMUST00000126071.9">
    <molecule id="Q3TDN2-1"/>
    <property type="protein sequence ID" value="ENSMUSP00000121182.2"/>
    <property type="gene ID" value="ENSMUSG00000025873.17"/>
</dbReference>
<dbReference type="GeneID" id="76577"/>
<dbReference type="KEGG" id="mmu:76577"/>
<dbReference type="UCSC" id="uc007qoq.2">
    <molecule id="Q3TDN2-1"/>
    <property type="organism name" value="mouse"/>
</dbReference>
<dbReference type="UCSC" id="uc007qor.2">
    <molecule id="Q3TDN2-2"/>
    <property type="organism name" value="mouse"/>
</dbReference>
<dbReference type="AGR" id="MGI:1923827"/>
<dbReference type="CTD" id="23197"/>
<dbReference type="MGI" id="MGI:1923827">
    <property type="gene designation" value="Faf2"/>
</dbReference>
<dbReference type="VEuPathDB" id="HostDB:ENSMUSG00000025873"/>
<dbReference type="eggNOG" id="KOG1363">
    <property type="taxonomic scope" value="Eukaryota"/>
</dbReference>
<dbReference type="GeneTree" id="ENSGT00940000157197"/>
<dbReference type="HOGENOM" id="CLU_047924_0_0_1"/>
<dbReference type="InParanoid" id="Q3TDN2"/>
<dbReference type="OMA" id="ILIRHQW"/>
<dbReference type="OrthoDB" id="1026733at2759"/>
<dbReference type="PhylomeDB" id="Q3TDN2"/>
<dbReference type="TreeFam" id="TF314172"/>
<dbReference type="Reactome" id="R-MMU-6798695">
    <property type="pathway name" value="Neutrophil degranulation"/>
</dbReference>
<dbReference type="Reactome" id="R-MMU-8980692">
    <property type="pathway name" value="RHOA GTPase cycle"/>
</dbReference>
<dbReference type="BioGRID-ORCS" id="76577">
    <property type="hits" value="13 hits in 78 CRISPR screens"/>
</dbReference>
<dbReference type="ChiTaRS" id="Faf2">
    <property type="organism name" value="mouse"/>
</dbReference>
<dbReference type="PRO" id="PR:Q3TDN2"/>
<dbReference type="Proteomes" id="UP000000589">
    <property type="component" value="Chromosome 13"/>
</dbReference>
<dbReference type="RNAct" id="Q3TDN2">
    <property type="molecule type" value="protein"/>
</dbReference>
<dbReference type="Bgee" id="ENSMUSG00000025873">
    <property type="expression patterns" value="Expressed in spermatocyte and 229 other cell types or tissues"/>
</dbReference>
<dbReference type="ExpressionAtlas" id="Q3TDN2">
    <property type="expression patterns" value="baseline and differential"/>
</dbReference>
<dbReference type="GO" id="GO:0005783">
    <property type="term" value="C:endoplasmic reticulum"/>
    <property type="evidence" value="ECO:0000250"/>
    <property type="project" value="UniProtKB"/>
</dbReference>
<dbReference type="GO" id="GO:0005811">
    <property type="term" value="C:lipid droplet"/>
    <property type="evidence" value="ECO:0000266"/>
    <property type="project" value="MGI"/>
</dbReference>
<dbReference type="GO" id="GO:0034098">
    <property type="term" value="C:VCP-NPL4-UFD1 AAA ATPase complex"/>
    <property type="evidence" value="ECO:0007669"/>
    <property type="project" value="Ensembl"/>
</dbReference>
<dbReference type="GO" id="GO:0035473">
    <property type="term" value="F:lipase binding"/>
    <property type="evidence" value="ECO:0000266"/>
    <property type="project" value="MGI"/>
</dbReference>
<dbReference type="GO" id="GO:0055102">
    <property type="term" value="F:lipase inhibitor activity"/>
    <property type="evidence" value="ECO:0000266"/>
    <property type="project" value="MGI"/>
</dbReference>
<dbReference type="GO" id="GO:0030674">
    <property type="term" value="F:protein-macromolecule adaptor activity"/>
    <property type="evidence" value="ECO:0000250"/>
    <property type="project" value="UniProtKB"/>
</dbReference>
<dbReference type="GO" id="GO:0043130">
    <property type="term" value="F:ubiquitin binding"/>
    <property type="evidence" value="ECO:0007669"/>
    <property type="project" value="Ensembl"/>
</dbReference>
<dbReference type="GO" id="GO:0031625">
    <property type="term" value="F:ubiquitin protein ligase binding"/>
    <property type="evidence" value="ECO:0007669"/>
    <property type="project" value="Ensembl"/>
</dbReference>
<dbReference type="GO" id="GO:0036503">
    <property type="term" value="P:ERAD pathway"/>
    <property type="evidence" value="ECO:0000250"/>
    <property type="project" value="UniProtKB"/>
</dbReference>
<dbReference type="GO" id="GO:0034389">
    <property type="term" value="P:lipid droplet organization"/>
    <property type="evidence" value="ECO:0000266"/>
    <property type="project" value="MGI"/>
</dbReference>
<dbReference type="GO" id="GO:0043161">
    <property type="term" value="P:proteasome-mediated ubiquitin-dependent protein catabolic process"/>
    <property type="evidence" value="ECO:0000315"/>
    <property type="project" value="UniProtKB"/>
</dbReference>
<dbReference type="GO" id="GO:0006986">
    <property type="term" value="P:response to unfolded protein"/>
    <property type="evidence" value="ECO:0007669"/>
    <property type="project" value="UniProtKB-KW"/>
</dbReference>
<dbReference type="GO" id="GO:0030970">
    <property type="term" value="P:retrograde protein transport, ER to cytosol"/>
    <property type="evidence" value="ECO:0007669"/>
    <property type="project" value="Ensembl"/>
</dbReference>
<dbReference type="GO" id="GO:0035617">
    <property type="term" value="P:stress granule disassembly"/>
    <property type="evidence" value="ECO:0000250"/>
    <property type="project" value="UniProtKB"/>
</dbReference>
<dbReference type="CDD" id="cd02991">
    <property type="entry name" value="UAS_ETEA"/>
    <property type="match status" value="1"/>
</dbReference>
<dbReference type="CDD" id="cd14414">
    <property type="entry name" value="UBA_FAF2"/>
    <property type="match status" value="1"/>
</dbReference>
<dbReference type="CDD" id="cd16120">
    <property type="entry name" value="UBX_UBXN3B"/>
    <property type="match status" value="1"/>
</dbReference>
<dbReference type="FunFam" id="3.10.20.90:FF:000101">
    <property type="entry name" value="FAS-associated factor 2 isoform X2"/>
    <property type="match status" value="1"/>
</dbReference>
<dbReference type="FunFam" id="3.40.30.10:FF:000066">
    <property type="entry name" value="FAS-associated factor 2 isoform X2"/>
    <property type="match status" value="1"/>
</dbReference>
<dbReference type="Gene3D" id="1.10.8.10">
    <property type="entry name" value="DNA helicase RuvA subunit, C-terminal domain"/>
    <property type="match status" value="1"/>
</dbReference>
<dbReference type="Gene3D" id="3.40.30.10">
    <property type="entry name" value="Glutaredoxin"/>
    <property type="match status" value="1"/>
</dbReference>
<dbReference type="Gene3D" id="3.10.20.90">
    <property type="entry name" value="Phosphatidylinositol 3-kinase Catalytic Subunit, Chain A, domain 1"/>
    <property type="match status" value="1"/>
</dbReference>
<dbReference type="InterPro" id="IPR049483">
    <property type="entry name" value="FAF1_2-like_UAS"/>
</dbReference>
<dbReference type="InterPro" id="IPR036249">
    <property type="entry name" value="Thioredoxin-like_sf"/>
</dbReference>
<dbReference type="InterPro" id="IPR006577">
    <property type="entry name" value="UAS"/>
</dbReference>
<dbReference type="InterPro" id="IPR009060">
    <property type="entry name" value="UBA-like_sf"/>
</dbReference>
<dbReference type="InterPro" id="IPR054109">
    <property type="entry name" value="UBA_8"/>
</dbReference>
<dbReference type="InterPro" id="IPR029071">
    <property type="entry name" value="Ubiquitin-like_domsf"/>
</dbReference>
<dbReference type="InterPro" id="IPR001012">
    <property type="entry name" value="UBX_dom"/>
</dbReference>
<dbReference type="InterPro" id="IPR050730">
    <property type="entry name" value="UBX_domain-protein"/>
</dbReference>
<dbReference type="PANTHER" id="PTHR23322:SF1">
    <property type="entry name" value="FAS-ASSOCIATED FACTOR 2"/>
    <property type="match status" value="1"/>
</dbReference>
<dbReference type="PANTHER" id="PTHR23322">
    <property type="entry name" value="FAS-ASSOCIATED PROTEIN"/>
    <property type="match status" value="1"/>
</dbReference>
<dbReference type="Pfam" id="PF21021">
    <property type="entry name" value="FAF1"/>
    <property type="match status" value="1"/>
</dbReference>
<dbReference type="Pfam" id="PF22566">
    <property type="entry name" value="UBA_8"/>
    <property type="match status" value="1"/>
</dbReference>
<dbReference type="Pfam" id="PF00789">
    <property type="entry name" value="UBX"/>
    <property type="match status" value="1"/>
</dbReference>
<dbReference type="SMART" id="SM00594">
    <property type="entry name" value="UAS"/>
    <property type="match status" value="1"/>
</dbReference>
<dbReference type="SUPFAM" id="SSF52833">
    <property type="entry name" value="Thioredoxin-like"/>
    <property type="match status" value="1"/>
</dbReference>
<dbReference type="SUPFAM" id="SSF46934">
    <property type="entry name" value="UBA-like"/>
    <property type="match status" value="1"/>
</dbReference>
<dbReference type="SUPFAM" id="SSF54236">
    <property type="entry name" value="Ubiquitin-like"/>
    <property type="match status" value="1"/>
</dbReference>
<dbReference type="PROSITE" id="PS50033">
    <property type="entry name" value="UBX"/>
    <property type="match status" value="1"/>
</dbReference>
<name>FAF2_MOUSE</name>
<sequence>MAAPEEQDLTQEQTEKLLQFQDLTGIESMEQCRLALEQHNWNMEAAVQDRLNEQEGVPSVFNPPPARPLQVNTADHRIYSYVVSRPQPRGLLGWGYYLIMLPFRFTYYTILDIFRFALRFIRPDPRSRVTDPVGDIVSFMHSFEEKYGRAHPVFYQGTYSQALNDAKRELRFLLVYLHGDDHQDSDEFCRNALCAPEVISLINSRMLFWACSTNKPEGYRVSQALRENTYPFLAMIMLKDRRMTVVGRLEGLIQPDDLINQLTFIMDANQTYLVSERLEREERNQTQVLRQQQDEAYLASLRADQEKERKKREEKERKRRKEEEVQQQKLAEERRRQNLQEEKERKLECLPPEPSPDDPESVKIIFKLPNDSRVERRFHFSQSLTVIHDFLFSLKESPEKFQIEANFPRRVLPCVPSEEWPNPPTLQEAGLSHTEVLFVQDLTDE</sequence>
<gene>
    <name type="primary">Faf2</name>
    <name type="synonym">Kiaa0887</name>
    <name type="synonym">Ubxd8</name>
</gene>
<keyword id="KW-0007">Acetylation</keyword>
<keyword id="KW-0025">Alternative splicing</keyword>
<keyword id="KW-0175">Coiled coil</keyword>
<keyword id="KW-0963">Cytoplasm</keyword>
<keyword id="KW-0256">Endoplasmic reticulum</keyword>
<keyword id="KW-0551">Lipid droplet</keyword>
<keyword id="KW-1185">Reference proteome</keyword>
<keyword id="KW-0834">Unfolded protein response</keyword>
<organism>
    <name type="scientific">Mus musculus</name>
    <name type="common">Mouse</name>
    <dbReference type="NCBI Taxonomy" id="10090"/>
    <lineage>
        <taxon>Eukaryota</taxon>
        <taxon>Metazoa</taxon>
        <taxon>Chordata</taxon>
        <taxon>Craniata</taxon>
        <taxon>Vertebrata</taxon>
        <taxon>Euteleostomi</taxon>
        <taxon>Mammalia</taxon>
        <taxon>Eutheria</taxon>
        <taxon>Euarchontoglires</taxon>
        <taxon>Glires</taxon>
        <taxon>Rodentia</taxon>
        <taxon>Myomorpha</taxon>
        <taxon>Muroidea</taxon>
        <taxon>Muridae</taxon>
        <taxon>Murinae</taxon>
        <taxon>Mus</taxon>
        <taxon>Mus</taxon>
    </lineage>
</organism>
<comment type="function">
    <text evidence="1">Plays an important role in endoplasmic reticulum-associated degradation (ERAD) that mediates ubiquitin-dependent degradation of misfolded endoplasmic reticulum proteins. By controlling the steady-state expression of the IGF1R receptor, indirectly regulates the insulin-like growth factor receptor signaling pathway. Involved in inhibition of lipid droplet degradation by binding to phospholipase PNPL2 and inhibiting its activity by promoting dissociation of PNPL2 from its endogenous activator, ABHD5 which inhibits the rate of triacylglycerol hydrolysis. Involved in stress granule disassembly: associates with ubiquitinated G3BP1 in response to heat shock, thereby promoting interaction between ubiquitinated G3BP1 and VCP, followed by G3BP1 extraction from stress granules and stress granule disassembly.</text>
</comment>
<comment type="subunit">
    <text evidence="1 5 6">Identified in a complex that contains SEL1L, OS9, FAF2/UBXD8, UBE2J1/UBC6E and AUP1. Interacts with YOD1. Interacts (via N-terminus) with UBQLN2 (via C-terminus). Interacts with PNPLA2 (By similarity). Interacts with ZFAND2B; probably through VCP (PubMed:24160817). Interacts with LMBR1L and UBAC2 (PubMed:31073040).</text>
</comment>
<comment type="subcellular location">
    <subcellularLocation>
        <location evidence="1">Cytoplasm</location>
    </subcellularLocation>
    <subcellularLocation>
        <location evidence="1">Lipid droplet</location>
    </subcellularLocation>
    <subcellularLocation>
        <location evidence="1">Endoplasmic reticulum</location>
    </subcellularLocation>
</comment>
<comment type="alternative products">
    <event type="alternative splicing"/>
    <isoform>
        <id>Q3TDN2-1</id>
        <name>1</name>
        <sequence type="displayed"/>
    </isoform>
    <isoform>
        <id>Q3TDN2-2</id>
        <name>2</name>
        <sequence type="described" ref="VSP_019504"/>
    </isoform>
</comment>